<accession>D0E0C2</accession>
<feature type="chain" id="PRO_0000439762" description="Sodium channel protein PaFPC1">
    <location>
        <begin position="1"/>
        <end position="1553"/>
    </location>
</feature>
<feature type="topological domain" description="Cytoplasmic" evidence="5 16">
    <location>
        <begin position="1"/>
        <end position="140"/>
    </location>
</feature>
<feature type="transmembrane region" description="Helical; Name=S1 of repeat I" evidence="5 16">
    <location>
        <begin position="141"/>
        <end position="159"/>
    </location>
</feature>
<feature type="topological domain" description="Extracellular" evidence="5 16">
    <location>
        <begin position="160"/>
        <end position="165"/>
    </location>
</feature>
<feature type="transmembrane region" description="Helical; Name=S2 of repeat I" evidence="5 16">
    <location>
        <begin position="166"/>
        <end position="186"/>
    </location>
</feature>
<feature type="topological domain" description="Cytoplasmic" evidence="5 16">
    <location>
        <begin position="187"/>
        <end position="200"/>
    </location>
</feature>
<feature type="transmembrane region" description="Helical; Name=S3 of repeat I" evidence="5 16">
    <location>
        <begin position="201"/>
        <end position="218"/>
    </location>
</feature>
<feature type="topological domain" description="Extracellular" evidence="5 16">
    <location>
        <begin position="219"/>
        <end position="224"/>
    </location>
</feature>
<feature type="transmembrane region" description="Helical; Name=S4 of repeat I" evidence="5 16">
    <location>
        <begin position="225"/>
        <end position="241"/>
    </location>
</feature>
<feature type="topological domain" description="Cytoplasmic" evidence="5 16">
    <location>
        <begin position="242"/>
        <end position="260"/>
    </location>
</feature>
<feature type="transmembrane region" description="Helical; Name=S5 of repeat I" evidence="5 16">
    <location>
        <begin position="261"/>
        <end position="280"/>
    </location>
</feature>
<feature type="topological domain" description="Extracellular" evidence="5 16">
    <location>
        <begin position="281"/>
        <end position="360"/>
    </location>
</feature>
<feature type="intramembrane region" description="Pore-forming" evidence="5 16">
    <location>
        <begin position="361"/>
        <end position="385"/>
    </location>
</feature>
<feature type="topological domain" description="Extracellular" evidence="5 16">
    <location>
        <begin position="386"/>
        <end position="392"/>
    </location>
</feature>
<feature type="transmembrane region" description="Helical; Name=S6 of repeat I" evidence="5 16">
    <location>
        <begin position="393"/>
        <end position="413"/>
    </location>
</feature>
<feature type="topological domain" description="Cytoplasmic" evidence="5 16">
    <location>
        <begin position="414"/>
        <end position="519"/>
    </location>
</feature>
<feature type="transmembrane region" description="Helical; Name=S1 of repeat II" evidence="5 16">
    <location>
        <begin position="520"/>
        <end position="538"/>
    </location>
</feature>
<feature type="topological domain" description="Extracellular" evidence="5 16">
    <location>
        <begin position="539"/>
        <end position="549"/>
    </location>
</feature>
<feature type="transmembrane region" description="Helical; Name=S2 of repeat II" evidence="5 16">
    <location>
        <begin position="550"/>
        <end position="569"/>
    </location>
</feature>
<feature type="topological domain" description="Cytoplasmic" evidence="5 16">
    <location>
        <begin position="570"/>
        <end position="583"/>
    </location>
</feature>
<feature type="transmembrane region" description="Helical; Name=S3 of repeat II" evidence="5 16">
    <location>
        <begin position="584"/>
        <end position="603"/>
    </location>
</feature>
<feature type="topological domain" description="Extracellular" evidence="5 16">
    <location>
        <begin position="604"/>
        <end position="605"/>
    </location>
</feature>
<feature type="transmembrane region" description="Helical; Name=S4 of repeat II" evidence="5 16">
    <location>
        <begin position="606"/>
        <end position="623"/>
    </location>
</feature>
<feature type="topological domain" description="Cytoplasmic" evidence="5 16">
    <location>
        <begin position="624"/>
        <end position="639"/>
    </location>
</feature>
<feature type="transmembrane region" description="Helical; Name=S5 of repeat II" evidence="5 16">
    <location>
        <begin position="640"/>
        <end position="658"/>
    </location>
</feature>
<feature type="topological domain" description="Extracellular" evidence="5 16">
    <location>
        <begin position="659"/>
        <end position="686"/>
    </location>
</feature>
<feature type="intramembrane region" description="Pore-forming" evidence="5 16">
    <location>
        <begin position="687"/>
        <end position="707"/>
    </location>
</feature>
<feature type="topological domain" description="Extracellular" evidence="5 16">
    <location>
        <begin position="708"/>
        <end position="719"/>
    </location>
</feature>
<feature type="transmembrane region" description="Helical; Name=S6 of repeat II" evidence="5 16">
    <location>
        <begin position="720"/>
        <end position="740"/>
    </location>
</feature>
<feature type="topological domain" description="Cytoplasmic" evidence="5 16">
    <location>
        <begin position="741"/>
        <end position="857"/>
    </location>
</feature>
<feature type="transmembrane region" description="Helical; Name=S1 of repeat III" evidence="5 16">
    <location>
        <begin position="858"/>
        <end position="875"/>
    </location>
</feature>
<feature type="topological domain" description="Extracellular" evidence="5 16">
    <location>
        <begin position="876"/>
        <end position="888"/>
    </location>
</feature>
<feature type="transmembrane region" description="Helical; Name=S2 of repeat III" evidence="5 16">
    <location>
        <begin position="889"/>
        <end position="907"/>
    </location>
</feature>
<feature type="topological domain" description="Cytoplasmic" evidence="5 16">
    <location>
        <begin position="908"/>
        <end position="921"/>
    </location>
</feature>
<feature type="transmembrane region" description="Helical; Name=S3 of repeat III" evidence="5 16">
    <location>
        <begin position="922"/>
        <end position="940"/>
    </location>
</feature>
<feature type="topological domain" description="Extracellular" evidence="5 16">
    <location>
        <begin position="941"/>
        <end position="945"/>
    </location>
</feature>
<feature type="transmembrane region" description="Helical; Name=S4 of repeat III" evidence="5 16">
    <location>
        <begin position="946"/>
        <end position="964"/>
    </location>
</feature>
<feature type="topological domain" description="Cytoplasmic" evidence="5 16">
    <location>
        <begin position="965"/>
        <end position="981"/>
    </location>
</feature>
<feature type="transmembrane region" description="Helical; Name=S5 of repeat III" evidence="5 16">
    <location>
        <begin position="982"/>
        <end position="1001"/>
    </location>
</feature>
<feature type="topological domain" description="Extracellular" evidence="5 16">
    <location>
        <begin position="1002"/>
        <end position="1047"/>
    </location>
</feature>
<feature type="intramembrane region" description="Pore-forming" evidence="5 16">
    <location>
        <begin position="1048"/>
        <end position="1069"/>
    </location>
</feature>
<feature type="topological domain" description="Extracellular" evidence="5 16">
    <location>
        <begin position="1070"/>
        <end position="1086"/>
    </location>
</feature>
<feature type="transmembrane region" description="Helical; Name=S6 of repeat III" evidence="5 16">
    <location>
        <begin position="1087"/>
        <end position="1108"/>
    </location>
</feature>
<feature type="topological domain" description="Cytoplasmic" evidence="5 16">
    <location>
        <begin position="1109"/>
        <end position="1171"/>
    </location>
</feature>
<feature type="transmembrane region" description="Helical; Name=S1 of repeat IV" evidence="5 16">
    <location>
        <begin position="1172"/>
        <end position="1189"/>
    </location>
</feature>
<feature type="topological domain" description="Extracellular" evidence="5 16">
    <location>
        <begin position="1190"/>
        <end position="1200"/>
    </location>
</feature>
<feature type="transmembrane region" description="Helical; Name=S2 of repeat IV" evidence="5 16">
    <location>
        <begin position="1201"/>
        <end position="1219"/>
    </location>
</feature>
<feature type="topological domain" description="Cytoplasmic" evidence="5 16">
    <location>
        <begin position="1220"/>
        <end position="1231"/>
    </location>
</feature>
<feature type="transmembrane region" description="Helical; Name=S3 of repeat IV" evidence="5 16">
    <location>
        <begin position="1232"/>
        <end position="1249"/>
    </location>
</feature>
<feature type="topological domain" description="Extracellular" evidence="5 16">
    <location>
        <begin position="1250"/>
        <end position="1262"/>
    </location>
</feature>
<feature type="transmembrane region" description="Helical; Name=S4 of repeat IV" evidence="5 16">
    <location>
        <begin position="1263"/>
        <end position="1279"/>
    </location>
</feature>
<feature type="topological domain" description="Cytoplasmic" evidence="5 16">
    <location>
        <begin position="1280"/>
        <end position="1298"/>
    </location>
</feature>
<feature type="transmembrane region" description="Helical; Name=S5 of repeat IV" evidence="5 16">
    <location>
        <begin position="1299"/>
        <end position="1316"/>
    </location>
</feature>
<feature type="topological domain" description="Extracellular" evidence="5 16">
    <location>
        <begin position="1317"/>
        <end position="1338"/>
    </location>
</feature>
<feature type="intramembrane region" description="Pore-forming" evidence="5 16">
    <location>
        <begin position="1339"/>
        <end position="1361"/>
    </location>
</feature>
<feature type="topological domain" description="Extracellular" evidence="5 16">
    <location>
        <begin position="1362"/>
        <end position="1387"/>
    </location>
</feature>
<feature type="transmembrane region" description="Helical; Name=S6 of repeat IV" evidence="5 16">
    <location>
        <begin position="1388"/>
        <end position="1410"/>
    </location>
</feature>
<feature type="topological domain" description="Cytoplasmic" evidence="5 16">
    <location>
        <begin position="1411"/>
        <end position="1553"/>
    </location>
</feature>
<feature type="region of interest" description="Disordered" evidence="3">
    <location>
        <begin position="1"/>
        <end position="68"/>
    </location>
</feature>
<feature type="region of interest" description="Linker region that may regulate channel inactivation" evidence="8">
    <location>
        <begin position="1133"/>
        <end position="1146"/>
    </location>
</feature>
<feature type="compositionally biased region" description="Basic and acidic residues" evidence="3">
    <location>
        <begin position="34"/>
        <end position="60"/>
    </location>
</feature>
<feature type="binding site" evidence="6 18">
    <location>
        <position position="378"/>
    </location>
    <ligand>
        <name>saxitoxin</name>
        <dbReference type="ChEBI" id="CHEBI:180458"/>
    </ligand>
</feature>
<feature type="binding site" evidence="6 19">
    <location>
        <position position="701"/>
    </location>
    <ligand>
        <name>tetrodotoxin</name>
        <dbReference type="ChEBI" id="CHEBI:180459"/>
    </ligand>
</feature>
<feature type="binding site" evidence="6 18">
    <location>
        <position position="704"/>
    </location>
    <ligand>
        <name>saxitoxin</name>
        <dbReference type="ChEBI" id="CHEBI:180458"/>
    </ligand>
</feature>
<feature type="binding site" evidence="6 19">
    <location>
        <position position="704"/>
    </location>
    <ligand>
        <name>tetrodotoxin</name>
        <dbReference type="ChEBI" id="CHEBI:180459"/>
    </ligand>
</feature>
<feature type="binding site" evidence="6 19">
    <location>
        <position position="1062"/>
    </location>
    <ligand>
        <name>tetrodotoxin</name>
        <dbReference type="ChEBI" id="CHEBI:180459"/>
    </ligand>
</feature>
<feature type="binding site" evidence="6 18">
    <location>
        <position position="1063"/>
    </location>
    <ligand>
        <name>saxitoxin</name>
        <dbReference type="ChEBI" id="CHEBI:180458"/>
    </ligand>
</feature>
<feature type="binding site" evidence="6 19">
    <location>
        <position position="1354"/>
    </location>
    <ligand>
        <name>tetrodotoxin</name>
        <dbReference type="ChEBI" id="CHEBI:180459"/>
    </ligand>
</feature>
<feature type="binding site" evidence="6 18">
    <location>
        <position position="1356"/>
    </location>
    <ligand>
        <name>saxitoxin</name>
        <dbReference type="ChEBI" id="CHEBI:180458"/>
    </ligand>
</feature>
<feature type="binding site" evidence="6 19">
    <location>
        <position position="1356"/>
    </location>
    <ligand>
        <name>tetrodotoxin</name>
        <dbReference type="ChEBI" id="CHEBI:180459"/>
    </ligand>
</feature>
<feature type="site" description="Interacts with the spider Mu-diguetoxin-Dc1a" evidence="6">
    <location>
        <position position="539"/>
    </location>
</feature>
<feature type="site" description="Interacts with the spider Mu-diguetoxin-Dc1a" evidence="6">
    <location>
        <begin position="542"/>
        <end position="543"/>
    </location>
</feature>
<feature type="site" description="Interacts with the spider Mu-diguetoxin-Dc1a" evidence="6">
    <location>
        <position position="549"/>
    </location>
</feature>
<feature type="site" description="Interacts with the spider Mu-diguetoxin-Dc1a" evidence="6">
    <location>
        <position position="613"/>
    </location>
</feature>
<feature type="site" description="Interacts with the spider Mu-diguetoxin-Dc1a" evidence="6">
    <location>
        <position position="1002"/>
    </location>
</feature>
<feature type="site" description="Interacts with the spider Mu-diguetoxin-Dc1a" evidence="6">
    <location>
        <position position="1027"/>
    </location>
</feature>
<feature type="site" description="Interacts with the spider Mu-diguetoxin-Dc1a" evidence="6">
    <location>
        <position position="1032"/>
    </location>
</feature>
<feature type="glycosylation site" description="N-linked (GlcNAc...) asparagine" evidence="5 16">
    <location>
        <position position="300"/>
    </location>
</feature>
<feature type="glycosylation site" description="N-linked (GlcNAc...) asparagine" evidence="5 6 16 17 18 19">
    <location>
        <position position="308"/>
    </location>
</feature>
<feature type="glycosylation site" description="N-linked (GlcNAc...) asparagine" evidence="5 6 16 17 18 19">
    <location>
        <position position="312"/>
    </location>
</feature>
<feature type="glycosylation site" description="N-linked (GlcNAc...) asparagine" evidence="5 6 16 17 18 19">
    <location>
        <position position="330"/>
    </location>
</feature>
<feature type="glycosylation site" description="N-linked (GlcNAc...) asparagine" evidence="1">
    <location>
        <position position="683"/>
    </location>
</feature>
<feature type="glycosylation site" description="N-linked (GlcNAc...) asparagine" evidence="5 6 16 17 18 19">
    <location>
        <position position="1015"/>
    </location>
</feature>
<feature type="glycosylation site" description="N-linked (GlcNAc...) asparagine; atypical" evidence="5 16">
    <location>
        <position position="1028"/>
    </location>
</feature>
<feature type="glycosylation site" description="N-linked (GlcNAc...) asparagine" evidence="5 6 16 17 18 19">
    <location>
        <position position="1034"/>
    </location>
</feature>
<feature type="disulfide bond" evidence="5 6 16 18 19">
    <location>
        <begin position="288"/>
        <end position="337"/>
    </location>
</feature>
<feature type="disulfide bond" evidence="6 17 18 19">
    <location>
        <begin position="328"/>
        <end position="343"/>
    </location>
</feature>
<feature type="disulfide bond" evidence="5 6 16 17 18 19">
    <location>
        <begin position="709"/>
        <end position="717"/>
    </location>
</feature>
<feature type="disulfide bond" evidence="5 6 16 17 18 19">
    <location>
        <begin position="1011"/>
        <end position="1030"/>
    </location>
</feature>
<feature type="disulfide bond" evidence="5 6 16 17 18 19">
    <location>
        <begin position="1368"/>
        <end position="1381"/>
    </location>
</feature>
<feature type="helix" evidence="22">
    <location>
        <begin position="52"/>
        <end position="55"/>
    </location>
</feature>
<feature type="turn" evidence="22">
    <location>
        <begin position="56"/>
        <end position="60"/>
    </location>
</feature>
<feature type="strand" evidence="22">
    <location>
        <begin position="68"/>
        <end position="70"/>
    </location>
</feature>
<feature type="strand" evidence="22">
    <location>
        <begin position="77"/>
        <end position="80"/>
    </location>
</feature>
<feature type="strand" evidence="21">
    <location>
        <begin position="86"/>
        <end position="88"/>
    </location>
</feature>
<feature type="turn" evidence="22">
    <location>
        <begin position="97"/>
        <end position="108"/>
    </location>
</feature>
<feature type="strand" evidence="22">
    <location>
        <begin position="109"/>
        <end position="112"/>
    </location>
</feature>
<feature type="strand" evidence="20">
    <location>
        <begin position="126"/>
        <end position="128"/>
    </location>
</feature>
<feature type="helix" evidence="24">
    <location>
        <begin position="130"/>
        <end position="138"/>
    </location>
</feature>
<feature type="helix" evidence="24">
    <location>
        <begin position="140"/>
        <end position="158"/>
    </location>
</feature>
<feature type="strand" evidence="23">
    <location>
        <begin position="159"/>
        <end position="161"/>
    </location>
</feature>
<feature type="helix" evidence="24">
    <location>
        <begin position="163"/>
        <end position="187"/>
    </location>
</feature>
<feature type="strand" evidence="24">
    <location>
        <begin position="189"/>
        <end position="192"/>
    </location>
</feature>
<feature type="helix" evidence="24">
    <location>
        <begin position="196"/>
        <end position="198"/>
    </location>
</feature>
<feature type="helix" evidence="24">
    <location>
        <begin position="200"/>
        <end position="217"/>
    </location>
</feature>
<feature type="strand" evidence="22">
    <location>
        <begin position="220"/>
        <end position="222"/>
    </location>
</feature>
<feature type="helix" evidence="24">
    <location>
        <begin position="224"/>
        <end position="226"/>
    </location>
</feature>
<feature type="helix" evidence="24">
    <location>
        <begin position="228"/>
        <end position="240"/>
    </location>
</feature>
<feature type="helix" evidence="24">
    <location>
        <begin position="244"/>
        <end position="257"/>
    </location>
</feature>
<feature type="helix" evidence="24">
    <location>
        <begin position="259"/>
        <end position="269"/>
    </location>
</feature>
<feature type="helix" evidence="22">
    <location>
        <begin position="283"/>
        <end position="285"/>
    </location>
</feature>
<feature type="strand" evidence="20">
    <location>
        <begin position="287"/>
        <end position="290"/>
    </location>
</feature>
<feature type="strand" evidence="25">
    <location>
        <begin position="294"/>
        <end position="296"/>
    </location>
</feature>
<feature type="helix" evidence="24">
    <location>
        <begin position="303"/>
        <end position="310"/>
    </location>
</feature>
<feature type="helix" evidence="24">
    <location>
        <begin position="313"/>
        <end position="315"/>
    </location>
</feature>
<feature type="strand" evidence="23">
    <location>
        <begin position="319"/>
        <end position="321"/>
    </location>
</feature>
<feature type="strand" evidence="21">
    <location>
        <begin position="330"/>
        <end position="334"/>
    </location>
</feature>
<feature type="strand" evidence="24">
    <location>
        <begin position="341"/>
        <end position="346"/>
    </location>
</feature>
<feature type="helix" evidence="24">
    <location>
        <begin position="351"/>
        <end position="354"/>
    </location>
</feature>
<feature type="strand" evidence="24">
    <location>
        <begin position="358"/>
        <end position="360"/>
    </location>
</feature>
<feature type="helix" evidence="24">
    <location>
        <begin position="361"/>
        <end position="373"/>
    </location>
</feature>
<feature type="helix" evidence="24">
    <location>
        <begin position="377"/>
        <end position="388"/>
    </location>
</feature>
<feature type="helix" evidence="24">
    <location>
        <begin position="390"/>
        <end position="392"/>
    </location>
</feature>
<feature type="helix" evidence="24">
    <location>
        <begin position="393"/>
        <end position="403"/>
    </location>
</feature>
<feature type="turn" evidence="24">
    <location>
        <begin position="404"/>
        <end position="406"/>
    </location>
</feature>
<feature type="helix" evidence="24">
    <location>
        <begin position="407"/>
        <end position="429"/>
    </location>
</feature>
<feature type="helix" evidence="21">
    <location>
        <begin position="430"/>
        <end position="433"/>
    </location>
</feature>
<feature type="helix" evidence="22">
    <location>
        <begin position="511"/>
        <end position="516"/>
    </location>
</feature>
<feature type="helix" evidence="24">
    <location>
        <begin position="519"/>
        <end position="537"/>
    </location>
</feature>
<feature type="strand" evidence="22">
    <location>
        <begin position="541"/>
        <end position="543"/>
    </location>
</feature>
<feature type="helix" evidence="24">
    <location>
        <begin position="545"/>
        <end position="572"/>
    </location>
</feature>
<feature type="helix" evidence="24">
    <location>
        <begin position="575"/>
        <end position="578"/>
    </location>
</feature>
<feature type="helix" evidence="24">
    <location>
        <begin position="582"/>
        <end position="599"/>
    </location>
</feature>
<feature type="strand" evidence="20">
    <location>
        <begin position="601"/>
        <end position="604"/>
    </location>
</feature>
<feature type="turn" evidence="20">
    <location>
        <begin position="606"/>
        <end position="608"/>
    </location>
</feature>
<feature type="helix" evidence="24">
    <location>
        <begin position="610"/>
        <end position="614"/>
    </location>
</feature>
<feature type="helix" evidence="24">
    <location>
        <begin position="615"/>
        <end position="618"/>
    </location>
</feature>
<feature type="helix" evidence="24">
    <location>
        <begin position="620"/>
        <end position="623"/>
    </location>
</feature>
<feature type="helix" evidence="24">
    <location>
        <begin position="625"/>
        <end position="636"/>
    </location>
</feature>
<feature type="helix" evidence="24">
    <location>
        <begin position="638"/>
        <end position="669"/>
    </location>
</feature>
<feature type="helix" evidence="24">
    <location>
        <begin position="671"/>
        <end position="673"/>
    </location>
</feature>
<feature type="helix" evidence="22">
    <location>
        <begin position="675"/>
        <end position="677"/>
    </location>
</feature>
<feature type="strand" evidence="24">
    <location>
        <begin position="684"/>
        <end position="686"/>
    </location>
</feature>
<feature type="helix" evidence="24">
    <location>
        <begin position="687"/>
        <end position="698"/>
    </location>
</feature>
<feature type="helix" evidence="24">
    <location>
        <begin position="703"/>
        <end position="712"/>
    </location>
</feature>
<feature type="helix" evidence="24">
    <location>
        <begin position="717"/>
        <end position="730"/>
    </location>
</feature>
<feature type="helix" evidence="24">
    <location>
        <begin position="732"/>
        <end position="743"/>
    </location>
</feature>
<feature type="turn" evidence="21">
    <location>
        <begin position="835"/>
        <end position="837"/>
    </location>
</feature>
<feature type="helix" evidence="24">
    <location>
        <begin position="843"/>
        <end position="854"/>
    </location>
</feature>
<feature type="helix" evidence="24">
    <location>
        <begin position="856"/>
        <end position="873"/>
    </location>
</feature>
<feature type="helix" evidence="24">
    <location>
        <begin position="880"/>
        <end position="882"/>
    </location>
</feature>
<feature type="helix" evidence="24">
    <location>
        <begin position="884"/>
        <end position="912"/>
    </location>
</feature>
<feature type="helix" evidence="24">
    <location>
        <begin position="914"/>
        <end position="918"/>
    </location>
</feature>
<feature type="helix" evidence="24">
    <location>
        <begin position="921"/>
        <end position="941"/>
    </location>
</feature>
<feature type="strand" evidence="22">
    <location>
        <begin position="942"/>
        <end position="944"/>
    </location>
</feature>
<feature type="helix" evidence="24">
    <location>
        <begin position="948"/>
        <end position="952"/>
    </location>
</feature>
<feature type="helix" evidence="24">
    <location>
        <begin position="953"/>
        <end position="958"/>
    </location>
</feature>
<feature type="helix" evidence="24">
    <location>
        <begin position="959"/>
        <end position="963"/>
    </location>
</feature>
<feature type="strand" evidence="22">
    <location>
        <begin position="965"/>
        <end position="967"/>
    </location>
</feature>
<feature type="helix" evidence="24">
    <location>
        <begin position="968"/>
        <end position="1004"/>
    </location>
</feature>
<feature type="strand" evidence="24">
    <location>
        <begin position="1010"/>
        <end position="1012"/>
    </location>
</feature>
<feature type="strand" evidence="25">
    <location>
        <begin position="1014"/>
        <end position="1016"/>
    </location>
</feature>
<feature type="turn" evidence="24">
    <location>
        <begin position="1021"/>
        <end position="1023"/>
    </location>
</feature>
<feature type="helix" evidence="24">
    <location>
        <begin position="1027"/>
        <end position="1032"/>
    </location>
</feature>
<feature type="strand" evidence="24">
    <location>
        <begin position="1036"/>
        <end position="1038"/>
    </location>
</feature>
<feature type="helix" evidence="24">
    <location>
        <begin position="1047"/>
        <end position="1058"/>
    </location>
</feature>
<feature type="helix" evidence="24">
    <location>
        <begin position="1063"/>
        <end position="1072"/>
    </location>
</feature>
<feature type="turn" evidence="24">
    <location>
        <begin position="1082"/>
        <end position="1085"/>
    </location>
</feature>
<feature type="helix" evidence="24">
    <location>
        <begin position="1086"/>
        <end position="1088"/>
    </location>
</feature>
<feature type="helix" evidence="24">
    <location>
        <begin position="1089"/>
        <end position="1099"/>
    </location>
</feature>
<feature type="turn" evidence="24">
    <location>
        <begin position="1100"/>
        <end position="1105"/>
    </location>
</feature>
<feature type="helix" evidence="24">
    <location>
        <begin position="1106"/>
        <end position="1122"/>
    </location>
</feature>
<feature type="strand" evidence="22">
    <location>
        <begin position="1127"/>
        <end position="1129"/>
    </location>
</feature>
<feature type="helix" evidence="24">
    <location>
        <begin position="1131"/>
        <end position="1143"/>
    </location>
</feature>
<feature type="helix" evidence="22">
    <location>
        <begin position="1158"/>
        <end position="1165"/>
    </location>
</feature>
<feature type="turn" evidence="20">
    <location>
        <begin position="1166"/>
        <end position="1168"/>
    </location>
</feature>
<feature type="helix" evidence="22">
    <location>
        <begin position="1170"/>
        <end position="1185"/>
    </location>
</feature>
<feature type="helix" evidence="22">
    <location>
        <begin position="1187"/>
        <end position="1189"/>
    </location>
</feature>
<feature type="helix" evidence="22">
    <location>
        <begin position="1196"/>
        <end position="1204"/>
    </location>
</feature>
<feature type="helix" evidence="22">
    <location>
        <begin position="1207"/>
        <end position="1222"/>
    </location>
</feature>
<feature type="helix" evidence="22">
    <location>
        <begin position="1226"/>
        <end position="1230"/>
    </location>
</feature>
<feature type="helix" evidence="22">
    <location>
        <begin position="1232"/>
        <end position="1248"/>
    </location>
</feature>
<feature type="strand" evidence="21">
    <location>
        <begin position="1252"/>
        <end position="1254"/>
    </location>
</feature>
<feature type="strand" evidence="22">
    <location>
        <begin position="1256"/>
        <end position="1259"/>
    </location>
</feature>
<feature type="helix" evidence="22">
    <location>
        <begin position="1261"/>
        <end position="1270"/>
    </location>
</feature>
<feature type="helix" evidence="22">
    <location>
        <begin position="1271"/>
        <end position="1274"/>
    </location>
</feature>
<feature type="helix" evidence="22">
    <location>
        <begin position="1275"/>
        <end position="1278"/>
    </location>
</feature>
<feature type="helix" evidence="24">
    <location>
        <begin position="1287"/>
        <end position="1321"/>
    </location>
</feature>
<feature type="strand" evidence="24">
    <location>
        <begin position="1332"/>
        <end position="1338"/>
    </location>
</feature>
<feature type="helix" evidence="24">
    <location>
        <begin position="1339"/>
        <end position="1349"/>
    </location>
</feature>
<feature type="turn" evidence="24">
    <location>
        <begin position="1350"/>
        <end position="1354"/>
    </location>
</feature>
<feature type="helix" evidence="24">
    <location>
        <begin position="1355"/>
        <end position="1362"/>
    </location>
</feature>
<feature type="turn" evidence="24">
    <location>
        <begin position="1373"/>
        <end position="1376"/>
    </location>
</feature>
<feature type="helix" evidence="24">
    <location>
        <begin position="1384"/>
        <end position="1398"/>
    </location>
</feature>
<feature type="turn" evidence="24">
    <location>
        <begin position="1399"/>
        <end position="1401"/>
    </location>
</feature>
<feature type="helix" evidence="24">
    <location>
        <begin position="1402"/>
        <end position="1423"/>
    </location>
</feature>
<feature type="helix" evidence="24">
    <location>
        <begin position="1427"/>
        <end position="1436"/>
    </location>
</feature>
<feature type="turn" evidence="22">
    <location>
        <begin position="1438"/>
        <end position="1440"/>
    </location>
</feature>
<feature type="strand" evidence="22">
    <location>
        <begin position="1446"/>
        <end position="1449"/>
    </location>
</feature>
<feature type="helix" evidence="22">
    <location>
        <begin position="1450"/>
        <end position="1452"/>
    </location>
</feature>
<feature type="helix" evidence="22">
    <location>
        <begin position="1453"/>
        <end position="1458"/>
    </location>
</feature>
<feature type="turn" evidence="22">
    <location>
        <begin position="1462"/>
        <end position="1464"/>
    </location>
</feature>
<feature type="helix" evidence="22">
    <location>
        <begin position="1470"/>
        <end position="1474"/>
    </location>
</feature>
<feature type="helix" evidence="22">
    <location>
        <begin position="1483"/>
        <end position="1485"/>
    </location>
</feature>
<feature type="strand" evidence="22">
    <location>
        <begin position="1486"/>
        <end position="1488"/>
    </location>
</feature>
<feature type="helix" evidence="22">
    <location>
        <begin position="1489"/>
        <end position="1503"/>
    </location>
</feature>
<feature type="turn" evidence="22">
    <location>
        <begin position="1509"/>
        <end position="1512"/>
    </location>
</feature>
<feature type="helix" evidence="22">
    <location>
        <begin position="1514"/>
        <end position="1519"/>
    </location>
</feature>
<comment type="function">
    <text evidence="2 9">Mediates the voltage-dependent sodium ion permeability of excitable membranes.</text>
</comment>
<comment type="activity regulation">
    <text evidence="10">Inhibited by the pore blockers saxitoxin and tetrodotoxin.</text>
</comment>
<comment type="subcellular location">
    <subcellularLocation>
        <location evidence="2 5">Cell membrane</location>
        <topology evidence="2 5">Multi-pass membrane protein</topology>
    </subcellularLocation>
</comment>
<comment type="tissue specificity">
    <text evidence="4">Detected in adult nerve cord, muscle, gut and mushroom-shaped accessory glands.</text>
</comment>
<comment type="domain">
    <text evidence="9">The sequence contains 4 internal repeats, each with 5 hydrophobic segments (S1, S2, S3, S5, S6) and one positively charged segment (S4). Segments S4 are probably the voltage-sensors and are characterized by a series of positively charged amino acids at every third position.</text>
</comment>
<comment type="similarity">
    <text evidence="2">Belongs to the sodium channel (TC 1.A.1.10) family.</text>
</comment>
<protein>
    <recommendedName>
        <fullName evidence="7">Sodium channel protein PaFPC1</fullName>
        <shortName evidence="7">PaFPC1</shortName>
    </recommendedName>
    <alternativeName>
        <fullName evidence="8">NavPaS</fullName>
    </alternativeName>
</protein>
<dbReference type="EMBL" id="GQ132120">
    <property type="protein sequence ID" value="ACX44802.1"/>
    <property type="molecule type" value="mRNA"/>
</dbReference>
<dbReference type="PDB" id="5X0M">
    <property type="method" value="EM"/>
    <property type="resolution" value="3.80 A"/>
    <property type="chains" value="A=1-1553"/>
</dbReference>
<dbReference type="PDB" id="6A90">
    <property type="method" value="EM"/>
    <property type="resolution" value="2.80 A"/>
    <property type="chains" value="A=1-1553"/>
</dbReference>
<dbReference type="PDB" id="6A91">
    <property type="method" value="EM"/>
    <property type="resolution" value="3.20 A"/>
    <property type="chains" value="A=1-1553"/>
</dbReference>
<dbReference type="PDB" id="6A95">
    <property type="method" value="EM"/>
    <property type="resolution" value="2.60 A"/>
    <property type="chains" value="A=1-1553"/>
</dbReference>
<dbReference type="PDB" id="6NT3">
    <property type="method" value="EM"/>
    <property type="resolution" value="3.40 A"/>
    <property type="chains" value="A=1-269, A=289-1155, A=1287-1505"/>
</dbReference>
<dbReference type="PDB" id="6NT4">
    <property type="method" value="EM"/>
    <property type="resolution" value="3.50 A"/>
    <property type="chains" value="A=1-269, A=289-1155, A=1287-1505"/>
</dbReference>
<dbReference type="PDB" id="8F0P">
    <property type="method" value="EM"/>
    <property type="resolution" value="2.20 A"/>
    <property type="chains" value="A=1-269, A=289-1155, A=1287-1553"/>
</dbReference>
<dbReference type="PDB" id="8F0Q">
    <property type="method" value="EM"/>
    <property type="resolution" value="2.50 A"/>
    <property type="chains" value="A=1-269, A=289-1155, A=1287-1553"/>
</dbReference>
<dbReference type="PDB" id="8F0R">
    <property type="method" value="EM"/>
    <property type="resolution" value="2.90 A"/>
    <property type="chains" value="A=1-269, A=289-1155, A=1287-1553"/>
</dbReference>
<dbReference type="PDB" id="8F0S">
    <property type="method" value="EM"/>
    <property type="resolution" value="3.10 A"/>
    <property type="chains" value="A=1-269, A=289-1155, A=1287-1553"/>
</dbReference>
<dbReference type="PDB" id="8VQC">
    <property type="method" value="EM"/>
    <property type="resolution" value="3.90 A"/>
    <property type="chains" value="A=1-1553"/>
</dbReference>
<dbReference type="PDBsum" id="5X0M"/>
<dbReference type="PDBsum" id="6A90"/>
<dbReference type="PDBsum" id="6A91"/>
<dbReference type="PDBsum" id="6A95"/>
<dbReference type="PDBsum" id="6NT3"/>
<dbReference type="PDBsum" id="6NT4"/>
<dbReference type="PDBsum" id="8F0P"/>
<dbReference type="PDBsum" id="8F0Q"/>
<dbReference type="PDBsum" id="8F0R"/>
<dbReference type="PDBsum" id="8F0S"/>
<dbReference type="PDBsum" id="8VQC"/>
<dbReference type="EMDB" id="EMD-0500"/>
<dbReference type="EMDB" id="EMD-0501"/>
<dbReference type="EMDB" id="EMD-28776"/>
<dbReference type="EMDB" id="EMD-28777"/>
<dbReference type="EMDB" id="EMD-28778"/>
<dbReference type="EMDB" id="EMD-28779"/>
<dbReference type="EMDB" id="EMD-43438"/>
<dbReference type="EMDB" id="EMD-6698"/>
<dbReference type="EMDB" id="EMD-6995"/>
<dbReference type="EMDB" id="EMD-6996"/>
<dbReference type="EMDB" id="EMD-6997"/>
<dbReference type="SMR" id="D0E0C2"/>
<dbReference type="IntAct" id="D0E0C2">
    <property type="interactions" value="1"/>
</dbReference>
<dbReference type="TCDB" id="1.A.1.10.20">
    <property type="family name" value="the voltage-gated ion channel (vic) superfamily"/>
</dbReference>
<dbReference type="iPTMnet" id="D0E0C2"/>
<dbReference type="GO" id="GO:0001518">
    <property type="term" value="C:voltage-gated sodium channel complex"/>
    <property type="evidence" value="ECO:0007669"/>
    <property type="project" value="InterPro"/>
</dbReference>
<dbReference type="GO" id="GO:0022843">
    <property type="term" value="F:voltage-gated monoatomic cation channel activity"/>
    <property type="evidence" value="ECO:0007669"/>
    <property type="project" value="UniProtKB-ARBA"/>
</dbReference>
<dbReference type="GO" id="GO:0005248">
    <property type="term" value="F:voltage-gated sodium channel activity"/>
    <property type="evidence" value="ECO:0007669"/>
    <property type="project" value="InterPro"/>
</dbReference>
<dbReference type="GO" id="GO:0086010">
    <property type="term" value="P:membrane depolarization during action potential"/>
    <property type="evidence" value="ECO:0007669"/>
    <property type="project" value="TreeGrafter"/>
</dbReference>
<dbReference type="GO" id="GO:0019228">
    <property type="term" value="P:neuronal action potential"/>
    <property type="evidence" value="ECO:0007669"/>
    <property type="project" value="TreeGrafter"/>
</dbReference>
<dbReference type="FunFam" id="1.20.120.350:FF:000019">
    <property type="entry name" value="Sodium channel protein"/>
    <property type="match status" value="1"/>
</dbReference>
<dbReference type="FunFam" id="1.20.120.350:FF:000059">
    <property type="entry name" value="Sodium channel protein"/>
    <property type="match status" value="1"/>
</dbReference>
<dbReference type="FunFam" id="1.20.120.350:FF:000075">
    <property type="entry name" value="Sodium channel protein"/>
    <property type="match status" value="1"/>
</dbReference>
<dbReference type="Gene3D" id="1.10.287.70">
    <property type="match status" value="4"/>
</dbReference>
<dbReference type="Gene3D" id="1.10.238.10">
    <property type="entry name" value="EF-hand"/>
    <property type="match status" value="1"/>
</dbReference>
<dbReference type="Gene3D" id="1.20.120.350">
    <property type="entry name" value="Voltage-gated potassium channels. Chain C"/>
    <property type="match status" value="4"/>
</dbReference>
<dbReference type="InterPro" id="IPR031649">
    <property type="entry name" value="GPHH_dom"/>
</dbReference>
<dbReference type="InterPro" id="IPR005821">
    <property type="entry name" value="Ion_trans_dom"/>
</dbReference>
<dbReference type="InterPro" id="IPR001696">
    <property type="entry name" value="Na_channel_asu"/>
</dbReference>
<dbReference type="InterPro" id="IPR043203">
    <property type="entry name" value="VGCC_Ca_Na"/>
</dbReference>
<dbReference type="InterPro" id="IPR027359">
    <property type="entry name" value="Volt_channel_dom_sf"/>
</dbReference>
<dbReference type="PANTHER" id="PTHR10037:SF288">
    <property type="entry name" value="SODIUM CHANNEL PROTEIN PARA"/>
    <property type="match status" value="1"/>
</dbReference>
<dbReference type="PANTHER" id="PTHR10037">
    <property type="entry name" value="VOLTAGE-GATED CATION CHANNEL CALCIUM AND SODIUM"/>
    <property type="match status" value="1"/>
</dbReference>
<dbReference type="Pfam" id="PF16905">
    <property type="entry name" value="GPHH"/>
    <property type="match status" value="1"/>
</dbReference>
<dbReference type="Pfam" id="PF00520">
    <property type="entry name" value="Ion_trans"/>
    <property type="match status" value="4"/>
</dbReference>
<dbReference type="PRINTS" id="PR00170">
    <property type="entry name" value="NACHANNEL"/>
</dbReference>
<dbReference type="SUPFAM" id="SSF81324">
    <property type="entry name" value="Voltage-gated potassium channels"/>
    <property type="match status" value="4"/>
</dbReference>
<reference evidence="11" key="1">
    <citation type="journal article" date="2009" name="Insect Biochem. Mol. Biol.">
        <title>The discovery of a novel sodium channel in the cockroach Periplaneta americana: evidence for an early duplication of the para-like gene.</title>
        <authorList>
            <person name="Moignot B."/>
            <person name="Lemaire C."/>
            <person name="Quinchard S."/>
            <person name="Lapied B."/>
            <person name="Legros C."/>
        </authorList>
    </citation>
    <scope>NUCLEOTIDE SEQUENCE [MRNA]</scope>
    <scope>TISSUE SPECIFICITY</scope>
    <source>
        <tissue evidence="11">Nerve cord</tissue>
    </source>
</reference>
<reference evidence="12" key="2">
    <citation type="journal article" date="2017" name="Science">
        <title>Structure of a eukaryotic voltage-gated sodium channel at near-atomic resolution.</title>
        <authorList>
            <person name="Shen H."/>
            <person name="Zhou Q."/>
            <person name="Pan X."/>
            <person name="Li Z."/>
            <person name="Wu J."/>
            <person name="Yan N."/>
        </authorList>
    </citation>
    <scope>STRUCTURE BY ELECTRON MICROSCOPY (3.80 ANGSTROMS)</scope>
    <scope>GLYCOSYLATION AT ASN-300; ASN-308; ASN-312; ASN-330; ASN-1015; ASN-1028 AND ASN-1034</scope>
    <scope>SUBCELLULAR LOCATION</scope>
    <scope>TOPOLOGY</scope>
    <scope>DISULFIDE BOND</scope>
    <scope>DOMAIN</scope>
</reference>
<reference evidence="13 14 15" key="3">
    <citation type="journal article" date="2018" name="Science">
        <title>Structural basis for the modulation of voltage-gated sodium channels by animal toxins.</title>
        <authorList>
            <person name="Shen H."/>
            <person name="Li Z."/>
            <person name="Jiang Y."/>
            <person name="Pan X."/>
            <person name="Wu J."/>
            <person name="Cristofori-Armstrong B."/>
            <person name="Smith J.J."/>
            <person name="Chin Y.K.Y."/>
            <person name="Lei J."/>
            <person name="Zhou Q."/>
            <person name="King G.F."/>
            <person name="Yan N."/>
        </authorList>
    </citation>
    <scope>STRUCTURE BY ELECTRON MICROSCOPY (2.6 ANGSTROMS) IN COMPLEX WITH SPIDER MU-DIGUETOXIN-DC1A; SAXITOXIN AND TETRODOTOXIN</scope>
    <scope>DISULFIDE BOND</scope>
    <scope>GLYCOSYLATION AT ASN-308; ASN-312; ASN-330; ASN-1015 AND ASN-1034</scope>
</reference>
<evidence type="ECO:0000255" key="1">
    <source>
        <dbReference type="PROSITE-ProRule" id="PRU00498"/>
    </source>
</evidence>
<evidence type="ECO:0000255" key="2">
    <source>
        <dbReference type="RuleBase" id="RU361132"/>
    </source>
</evidence>
<evidence type="ECO:0000256" key="3">
    <source>
        <dbReference type="SAM" id="MobiDB-lite"/>
    </source>
</evidence>
<evidence type="ECO:0000269" key="4">
    <source>
    </source>
</evidence>
<evidence type="ECO:0000269" key="5">
    <source>
    </source>
</evidence>
<evidence type="ECO:0000269" key="6">
    <source>
    </source>
</evidence>
<evidence type="ECO:0000303" key="7">
    <source>
    </source>
</evidence>
<evidence type="ECO:0000303" key="8">
    <source>
    </source>
</evidence>
<evidence type="ECO:0000305" key="9">
    <source>
    </source>
</evidence>
<evidence type="ECO:0000305" key="10">
    <source>
    </source>
</evidence>
<evidence type="ECO:0000312" key="11">
    <source>
        <dbReference type="EMBL" id="ACX44802.1"/>
    </source>
</evidence>
<evidence type="ECO:0000312" key="12">
    <source>
        <dbReference type="PDB" id="5X0M"/>
    </source>
</evidence>
<evidence type="ECO:0000312" key="13">
    <source>
        <dbReference type="PDB" id="6A90"/>
    </source>
</evidence>
<evidence type="ECO:0000312" key="14">
    <source>
        <dbReference type="PDB" id="6A91"/>
    </source>
</evidence>
<evidence type="ECO:0000312" key="15">
    <source>
        <dbReference type="PDB" id="6A95"/>
    </source>
</evidence>
<evidence type="ECO:0007744" key="16">
    <source>
        <dbReference type="PDB" id="5X0M"/>
    </source>
</evidence>
<evidence type="ECO:0007744" key="17">
    <source>
        <dbReference type="PDB" id="6A90"/>
    </source>
</evidence>
<evidence type="ECO:0007744" key="18">
    <source>
        <dbReference type="PDB" id="6A91"/>
    </source>
</evidence>
<evidence type="ECO:0007744" key="19">
    <source>
        <dbReference type="PDB" id="6A95"/>
    </source>
</evidence>
<evidence type="ECO:0007829" key="20">
    <source>
        <dbReference type="PDB" id="6A90"/>
    </source>
</evidence>
<evidence type="ECO:0007829" key="21">
    <source>
        <dbReference type="PDB" id="6A91"/>
    </source>
</evidence>
<evidence type="ECO:0007829" key="22">
    <source>
        <dbReference type="PDB" id="6A95"/>
    </source>
</evidence>
<evidence type="ECO:0007829" key="23">
    <source>
        <dbReference type="PDB" id="6NT4"/>
    </source>
</evidence>
<evidence type="ECO:0007829" key="24">
    <source>
        <dbReference type="PDB" id="8F0P"/>
    </source>
</evidence>
<evidence type="ECO:0007829" key="25">
    <source>
        <dbReference type="PDB" id="8F0Q"/>
    </source>
</evidence>
<name>SCNA1_PERAM</name>
<sequence>MADNSPLIREERQRLFRPYTRAMLTAPSAQPAKENGKTEENKDNSRDKGRGANKDRDGSAHPDQALEQGSRLPARMRNIFPAELASTPLEDFDPFYKNKKTFVVVTKAGDIFRFSGEKSLWMLDPFTPIRRVAISTMVQPIFSYFIMITILIHCIFMIMPATQTTYILELVFLSIYTIEVVVKVLARGFILHPFAYLRDPWNWLDFLVTLIGYITLVVDLGHLYALRAFRVLRSWRTVTIVPGWRTIVDALSLSITSLKDLVLLLLFSLFVFAVLGLQIYMGVLTQKCVKHFPADGSWGNFTDERWFNYTSNSSHWYIPDDWIEYPLCGNSSGAGMCPPGYTCLQGYGGNPNYGYTSFDTFGWAFLSVFRLVTLDYWEDLYQLALRSAGPWHILFFIIVVFYGTFCFLNFILAVVVMSYTHMVKRADEEKAAERELKKEKKAASVANNTANGQEQTTIEMNGDEAVVIDNNDQAARQQSDPETPAPSVTQRLTDFLCVWDCCVPWQKLQGAIGAVVLSPFFELFIAVIIVLNITFMALDHHDMNIEFERILRTGNYIFTSIYIVEAVLKIIALSPKFYFKDSWNVFDFIIVVFAILELGLEGVQGLSVFRSFRLLRVFRLAKFWPTLNNFMSVMTKSYGAFVNVMYVMFLLLFIFAIIGMQLFGMNYIDNMERFPDGDLPRWNFTDFLHSFMIVFRALCGEWIESMWDCMLVGDWSCIPFFVAVFFVGNLVILNLLIALLLNNYGSFCTSPTSDEEDSKDEDALAQIVRIFKRFKPNLNAVKLSPMKPDSEDIVESQEIQGNNIADAEDVLAGEFPPDCCCNAFYKCFPSRPARDSSVQRMWSNIRRVCFLLAKNKYFQKFVTAVLVITSVLLALEDIYLPQRPVLVNITLYVDYVLTAFFVIEMIIMLFAVGFKKYFTSKWYWLDFIVVVAYLLNFVLMCAGIEALQTLRLLRVFRLFRPLSKVNGMQVVTSTLVEAVPHIFNVILVGIFFWLVFAIMGVQLFAGKFYKCVDENSTVLSHEITMDRNDCLHENYTWENSPMNFDHVGNAYLSLLQVATFKGWLQIMNDAIDSREVHKQPIRETNIYMYLYFIFFIVFGSFFILKLFVCILIDIFRQQRRKAEGLSATDSRTQLIYRRAVMRTMSAKPVKRIPKPTCHPQSLMYDISVNRKFEYTMMILIILNVAVMAIDHYGQSMEFSEVLDYLNLIFIIIFFVECVIKVSGLRHHYFKDPWNIIDFLYVVLAIAGLMLSDVIEKYFISPTLLRILRILRVGRLLRYFQSARGMRLLLLALRKALRTLFNVSFLLFVIMFVYAVFGMEFFMHIRDAGAIDDVYNFKTFGQSIILLFQLATSAGWDGVYFAIANEEDCRAPDHELGYPGNCGSRALGIAYLVSYLIITCLVVINMYAAVILDYVLEVYEDSKEGLTDDDYDMFFEVWQQFDPEATQYIRYDQLSELLEALQPPLQVQKPNKYKILSMNIPICKDDHIFYKDVLEALVKDVFSRRGSPVEAGDVQAPNVDEAEYKPVSSTLQRQREEYCVRLIQNAWRKHKQQN</sequence>
<proteinExistence type="evidence at protein level"/>
<organism evidence="11">
    <name type="scientific">Periplaneta americana</name>
    <name type="common">American cockroach</name>
    <name type="synonym">Blatta americana</name>
    <dbReference type="NCBI Taxonomy" id="6978"/>
    <lineage>
        <taxon>Eukaryota</taxon>
        <taxon>Metazoa</taxon>
        <taxon>Ecdysozoa</taxon>
        <taxon>Arthropoda</taxon>
        <taxon>Hexapoda</taxon>
        <taxon>Insecta</taxon>
        <taxon>Pterygota</taxon>
        <taxon>Neoptera</taxon>
        <taxon>Polyneoptera</taxon>
        <taxon>Dictyoptera</taxon>
        <taxon>Blattodea</taxon>
        <taxon>Blattoidea</taxon>
        <taxon>Blattidae</taxon>
        <taxon>Blattinae</taxon>
        <taxon>Periplaneta</taxon>
    </lineage>
</organism>
<keyword id="KW-0002">3D-structure</keyword>
<keyword id="KW-1003">Cell membrane</keyword>
<keyword id="KW-1015">Disulfide bond</keyword>
<keyword id="KW-0325">Glycoprotein</keyword>
<keyword id="KW-0407">Ion channel</keyword>
<keyword id="KW-0406">Ion transport</keyword>
<keyword id="KW-0472">Membrane</keyword>
<keyword id="KW-0677">Repeat</keyword>
<keyword id="KW-0915">Sodium</keyword>
<keyword id="KW-0894">Sodium channel</keyword>
<keyword id="KW-0739">Sodium transport</keyword>
<keyword id="KW-0812">Transmembrane</keyword>
<keyword id="KW-1133">Transmembrane helix</keyword>
<keyword id="KW-0813">Transport</keyword>
<keyword id="KW-0851">Voltage-gated channel</keyword>